<protein>
    <recommendedName>
        <fullName evidence="3">Putative isocitrate lyase subunit B</fullName>
        <shortName evidence="2">ICL</shortName>
        <ecNumber evidence="2">4.1.3.1</ecNumber>
    </recommendedName>
    <alternativeName>
        <fullName evidence="2">Isocitrase</fullName>
    </alternativeName>
    <alternativeName>
        <fullName evidence="2">Isocitratase</fullName>
    </alternativeName>
</protein>
<comment type="function">
    <text evidence="3">Together with AceAa, they could catalyze the formation of succinate and glyoxylate from isocitrate.</text>
</comment>
<comment type="catalytic activity">
    <reaction evidence="2">
        <text>D-threo-isocitrate = glyoxylate + succinate</text>
        <dbReference type="Rhea" id="RHEA:13245"/>
        <dbReference type="ChEBI" id="CHEBI:15562"/>
        <dbReference type="ChEBI" id="CHEBI:30031"/>
        <dbReference type="ChEBI" id="CHEBI:36655"/>
        <dbReference type="EC" id="4.1.3.1"/>
    </reaction>
</comment>
<comment type="cofactor">
    <cofactor evidence="1">
        <name>Mg(2+)</name>
        <dbReference type="ChEBI" id="CHEBI:18420"/>
    </cofactor>
</comment>
<comment type="similarity">
    <text evidence="3">Belongs to the isocitrate lyase/PEP mutase superfamily. Isocitrate lyase family.</text>
</comment>
<name>ACEAB_MYCTU</name>
<keyword id="KW-0002">3D-structure</keyword>
<keyword id="KW-0456">Lyase</keyword>
<keyword id="KW-1185">Reference proteome</keyword>
<sequence length="398" mass="44582">MTYGEAVADVLEFGQSEGEPIGMAPEEWRAFAARASLHAARAKAKELGADPPWDCELAKTPEGYYQIRGGIPYAIAKSLAAAPFADILWMETKTADLADARQFAEAIHAEFPDQMLAYNLSPSFNWDTTGMTDEEMRRFPEELGKMGFVFNFITYGGHQIDGVAAEEFATALRQDGMLALARLQRKMRLVESPYRTPQTLVGGPRSDAALAASSGRTATTKAMGKGSTQHQHLVQTEVPRKLLEEWLAMWSGHYQLKDKLRVQLRPQRAGSEVLELGIHGESDDKLANVIFQPIQDRRGRTILLVRDQNTFGAELRQKRLMTLIHLWLVHRFKAQAVHYVTPTDDNLYQTSKMKSHGIFTEVNQEVGEIIVAEVNHPRIAELLTPDRVALRKLITKEA</sequence>
<feature type="chain" id="PRO_0000432567" description="Putative isocitrate lyase subunit B">
    <location>
        <begin position="1"/>
        <end position="398"/>
    </location>
</feature>
<feature type="helix" evidence="4">
    <location>
        <begin position="240"/>
        <end position="253"/>
    </location>
</feature>
<feature type="strand" evidence="4">
    <location>
        <begin position="261"/>
        <end position="268"/>
    </location>
</feature>
<feature type="strand" evidence="4">
    <location>
        <begin position="274"/>
        <end position="279"/>
    </location>
</feature>
<feature type="strand" evidence="4">
    <location>
        <begin position="285"/>
        <end position="295"/>
    </location>
</feature>
<feature type="strand" evidence="4">
    <location>
        <begin position="301"/>
        <end position="310"/>
    </location>
</feature>
<feature type="helix" evidence="4">
    <location>
        <begin position="313"/>
        <end position="315"/>
    </location>
</feature>
<feature type="strand" evidence="4">
    <location>
        <begin position="316"/>
        <end position="319"/>
    </location>
</feature>
<feature type="helix" evidence="4">
    <location>
        <begin position="320"/>
        <end position="332"/>
    </location>
</feature>
<feature type="strand" evidence="4">
    <location>
        <begin position="334"/>
        <end position="341"/>
    </location>
</feature>
<feature type="helix" evidence="4">
    <location>
        <begin position="344"/>
        <end position="355"/>
    </location>
</feature>
<feature type="strand" evidence="4">
    <location>
        <begin position="358"/>
        <end position="364"/>
    </location>
</feature>
<feature type="strand" evidence="4">
    <location>
        <begin position="370"/>
        <end position="374"/>
    </location>
</feature>
<feature type="helix" evidence="4">
    <location>
        <begin position="376"/>
        <end position="382"/>
    </location>
</feature>
<feature type="helix" evidence="4">
    <location>
        <begin position="388"/>
        <end position="394"/>
    </location>
</feature>
<accession>O07717</accession>
<accession>F2GH79</accession>
<accession>I6XZA6</accession>
<accession>L0T891</accession>
<proteinExistence type="evidence at protein level"/>
<dbReference type="EC" id="4.1.3.1" evidence="2"/>
<dbReference type="EMBL" id="AL123456">
    <property type="protein sequence ID" value="CCP44683.1"/>
    <property type="molecule type" value="Genomic_DNA"/>
</dbReference>
<dbReference type="EMBL" id="CP003248">
    <property type="protein sequence ID" value="AFN49848.1"/>
    <property type="molecule type" value="Genomic_DNA"/>
</dbReference>
<dbReference type="EMBL" id="JLDD01000021">
    <property type="protein sequence ID" value="KBJ34150.1"/>
    <property type="molecule type" value="Genomic_DNA"/>
</dbReference>
<dbReference type="RefSeq" id="NP_216432.1">
    <property type="nucleotide sequence ID" value="NC_000962.3"/>
</dbReference>
<dbReference type="RefSeq" id="WP_003903680.1">
    <property type="nucleotide sequence ID" value="NZ_NVQJ01000034.1"/>
</dbReference>
<dbReference type="PDB" id="8G8K">
    <property type="method" value="X-ray"/>
    <property type="resolution" value="1.54 A"/>
    <property type="chains" value="A=237-398"/>
</dbReference>
<dbReference type="PDBsum" id="8G8K"/>
<dbReference type="SMR" id="O07717"/>
<dbReference type="FunCoup" id="O07717">
    <property type="interactions" value="104"/>
</dbReference>
<dbReference type="STRING" id="83332.Rv1916"/>
<dbReference type="PaxDb" id="83332-Rv1916"/>
<dbReference type="DNASU" id="885383"/>
<dbReference type="GeneID" id="885383"/>
<dbReference type="KEGG" id="mtu:Rv1916"/>
<dbReference type="KEGG" id="mtv:RVBD_1916"/>
<dbReference type="PATRIC" id="fig|83332.111.peg.2131"/>
<dbReference type="TubercuList" id="Rv1916"/>
<dbReference type="eggNOG" id="COG2224">
    <property type="taxonomic scope" value="Bacteria"/>
</dbReference>
<dbReference type="HOGENOM" id="CLU_692273_0_0_11"/>
<dbReference type="InParanoid" id="O07717"/>
<dbReference type="OrthoDB" id="8629576at2"/>
<dbReference type="Proteomes" id="UP000001584">
    <property type="component" value="Chromosome"/>
</dbReference>
<dbReference type="GO" id="GO:0004451">
    <property type="term" value="F:isocitrate lyase activity"/>
    <property type="evidence" value="ECO:0000318"/>
    <property type="project" value="GO_Central"/>
</dbReference>
<dbReference type="GO" id="GO:0019752">
    <property type="term" value="P:carboxylic acid metabolic process"/>
    <property type="evidence" value="ECO:0007669"/>
    <property type="project" value="InterPro"/>
</dbReference>
<dbReference type="FunFam" id="3.20.20.60:FF:000024">
    <property type="entry name" value="Isocitrate lyase"/>
    <property type="match status" value="1"/>
</dbReference>
<dbReference type="Gene3D" id="3.20.20.60">
    <property type="entry name" value="Phosphoenolpyruvate-binding domains"/>
    <property type="match status" value="1"/>
</dbReference>
<dbReference type="InterPro" id="IPR006254">
    <property type="entry name" value="Isocitrate_lyase"/>
</dbReference>
<dbReference type="InterPro" id="IPR015813">
    <property type="entry name" value="Pyrv/PenolPyrv_kinase-like_dom"/>
</dbReference>
<dbReference type="InterPro" id="IPR040442">
    <property type="entry name" value="Pyrv_kinase-like_dom_sf"/>
</dbReference>
<dbReference type="PANTHER" id="PTHR21631:SF3">
    <property type="entry name" value="BIFUNCTIONAL GLYOXYLATE CYCLE PROTEIN"/>
    <property type="match status" value="1"/>
</dbReference>
<dbReference type="PANTHER" id="PTHR21631">
    <property type="entry name" value="ISOCITRATE LYASE/MALATE SYNTHASE"/>
    <property type="match status" value="1"/>
</dbReference>
<dbReference type="Pfam" id="PF00463">
    <property type="entry name" value="ICL"/>
    <property type="match status" value="1"/>
</dbReference>
<dbReference type="SUPFAM" id="SSF51621">
    <property type="entry name" value="Phosphoenolpyruvate/pyruvate domain"/>
    <property type="match status" value="1"/>
</dbReference>
<evidence type="ECO:0000250" key="1">
    <source>
        <dbReference type="UniProtKB" id="P9WKK7"/>
    </source>
</evidence>
<evidence type="ECO:0000250" key="2">
    <source>
        <dbReference type="UniProtKB" id="Q8VJU4"/>
    </source>
</evidence>
<evidence type="ECO:0000305" key="3"/>
<evidence type="ECO:0007829" key="4">
    <source>
        <dbReference type="PDB" id="8G8K"/>
    </source>
</evidence>
<organism>
    <name type="scientific">Mycobacterium tuberculosis (strain ATCC 25618 / H37Rv)</name>
    <dbReference type="NCBI Taxonomy" id="83332"/>
    <lineage>
        <taxon>Bacteria</taxon>
        <taxon>Bacillati</taxon>
        <taxon>Actinomycetota</taxon>
        <taxon>Actinomycetes</taxon>
        <taxon>Mycobacteriales</taxon>
        <taxon>Mycobacteriaceae</taxon>
        <taxon>Mycobacterium</taxon>
        <taxon>Mycobacterium tuberculosis complex</taxon>
    </lineage>
</organism>
<reference key="1">
    <citation type="journal article" date="1998" name="Nature">
        <title>Deciphering the biology of Mycobacterium tuberculosis from the complete genome sequence.</title>
        <authorList>
            <person name="Cole S.T."/>
            <person name="Brosch R."/>
            <person name="Parkhill J."/>
            <person name="Garnier T."/>
            <person name="Churcher C.M."/>
            <person name="Harris D.E."/>
            <person name="Gordon S.V."/>
            <person name="Eiglmeier K."/>
            <person name="Gas S."/>
            <person name="Barry C.E. III"/>
            <person name="Tekaia F."/>
            <person name="Badcock K."/>
            <person name="Basham D."/>
            <person name="Brown D."/>
            <person name="Chillingworth T."/>
            <person name="Connor R."/>
            <person name="Davies R.M."/>
            <person name="Devlin K."/>
            <person name="Feltwell T."/>
            <person name="Gentles S."/>
            <person name="Hamlin N."/>
            <person name="Holroyd S."/>
            <person name="Hornsby T."/>
            <person name="Jagels K."/>
            <person name="Krogh A."/>
            <person name="McLean J."/>
            <person name="Moule S."/>
            <person name="Murphy L.D."/>
            <person name="Oliver S."/>
            <person name="Osborne J."/>
            <person name="Quail M.A."/>
            <person name="Rajandream M.A."/>
            <person name="Rogers J."/>
            <person name="Rutter S."/>
            <person name="Seeger K."/>
            <person name="Skelton S."/>
            <person name="Squares S."/>
            <person name="Squares R."/>
            <person name="Sulston J.E."/>
            <person name="Taylor K."/>
            <person name="Whitehead S."/>
            <person name="Barrell B.G."/>
        </authorList>
    </citation>
    <scope>NUCLEOTIDE SEQUENCE [LARGE SCALE GENOMIC DNA]</scope>
    <source>
        <strain>ATCC 25618 / H37Rv</strain>
    </source>
</reference>
<reference key="2">
    <citation type="submission" date="2013-11" db="EMBL/GenBank/DDBJ databases">
        <title>The genome sequence of Mycobacterium tuberculosis H37Rv.</title>
        <authorList>
            <consortium name="The Broad Institute Genome Sequencing Platform"/>
            <person name="Galagan J."/>
            <person name="Kreiswirth B."/>
            <person name="Dobos K."/>
            <person name="Fortune S."/>
            <person name="Fitzgerald M."/>
            <person name="Young S.K."/>
            <person name="Zeng Q."/>
            <person name="Gargeya S."/>
            <person name="Abouelleil A."/>
            <person name="Alvarado L."/>
            <person name="Berlin A.M."/>
            <person name="Chapman S.B."/>
            <person name="Gainer-Dewar J."/>
            <person name="Goldberg J."/>
            <person name="Gnerre S."/>
            <person name="Griggs A."/>
            <person name="Gujja S."/>
            <person name="Hansen M."/>
            <person name="Howarth C."/>
            <person name="Imamovic A."/>
            <person name="Larimer J."/>
            <person name="McCowan C."/>
            <person name="Murphy C."/>
            <person name="Pearson M."/>
            <person name="Poon T."/>
            <person name="Priest M."/>
            <person name="Roberts A."/>
            <person name="Saif S."/>
            <person name="Shea T."/>
            <person name="Sykes S."/>
            <person name="Wortman J."/>
            <person name="Nusbaum C."/>
            <person name="Birren B."/>
        </authorList>
    </citation>
    <scope>NUCLEOTIDE SEQUENCE [LARGE SCALE GENOMIC DNA]</scope>
    <source>
        <strain>ATCC 25618 / H37Rv</strain>
    </source>
</reference>
<reference key="3">
    <citation type="submission" date="2014-04" db="EMBL/GenBank/DDBJ databases">
        <title>The genome sequence of Mycobacterium tuberculosis H37Rv.</title>
        <authorList>
            <consortium name="The Broad Institute Genomics Platform"/>
            <consortium name="The Broad Institute Genome Sequencing Center for Infectious Disease"/>
            <person name="Earl A.M."/>
            <person name="Kreiswirth B."/>
            <person name="Gomez J."/>
            <person name="Victor T."/>
            <person name="Desjardins C."/>
            <person name="Abeel T."/>
            <person name="Young S."/>
            <person name="Zeng Q."/>
            <person name="Gargeya S."/>
            <person name="Abouelleil A."/>
            <person name="Alvarado L."/>
            <person name="Chapman S.B."/>
            <person name="Gainer-Dewar J."/>
            <person name="Goldberg J."/>
            <person name="Griggs A."/>
            <person name="Gujja S."/>
            <person name="Hansen M."/>
            <person name="Howarth C."/>
            <person name="Imamovic A."/>
            <person name="Larimer J."/>
            <person name="Murphy C."/>
            <person name="Naylor J."/>
            <person name="Pearson M."/>
            <person name="Poon T.W."/>
            <person name="Priest M."/>
            <person name="Roberts A."/>
            <person name="Saif S."/>
            <person name="Shea T."/>
            <person name="Sykes S."/>
            <person name="Wortman J."/>
            <person name="Nusbaum C."/>
            <person name="Birren B."/>
        </authorList>
    </citation>
    <scope>NUCLEOTIDE SEQUENCE [LARGE SCALE GENOMIC DNA]</scope>
    <source>
        <strain>ATCC 25618 / H37Rv</strain>
    </source>
</reference>
<gene>
    <name type="primary">aceAb</name>
    <name type="ordered locus">Rv1916</name>
    <name type="ordered locus">RVBD_1916</name>
    <name type="ORF">P425_01981</name>
</gene>